<proteinExistence type="evidence at protein level"/>
<dbReference type="EMBL" id="AF002191">
    <property type="protein sequence ID" value="AAC38133.1"/>
    <property type="molecule type" value="Genomic_DNA"/>
</dbReference>
<dbReference type="EMBL" id="Y14081">
    <property type="protein sequence ID" value="CAA74471.1"/>
    <property type="molecule type" value="Genomic_DNA"/>
</dbReference>
<dbReference type="EMBL" id="AL009126">
    <property type="protein sequence ID" value="CAB12892.1"/>
    <property type="molecule type" value="Genomic_DNA"/>
</dbReference>
<dbReference type="PIR" id="H69833">
    <property type="entry name" value="H69833"/>
</dbReference>
<dbReference type="RefSeq" id="NP_388933.1">
    <property type="nucleotide sequence ID" value="NC_000964.3"/>
</dbReference>
<dbReference type="RefSeq" id="WP_003245772.1">
    <property type="nucleotide sequence ID" value="NZ_OZ025638.1"/>
</dbReference>
<dbReference type="SMR" id="O07563"/>
<dbReference type="FunCoup" id="O07563">
    <property type="interactions" value="128"/>
</dbReference>
<dbReference type="STRING" id="224308.BSU10520"/>
<dbReference type="TCDB" id="2.A.1.7.3">
    <property type="family name" value="the major facilitator superfamily (mfs)"/>
</dbReference>
<dbReference type="jPOST" id="O07563"/>
<dbReference type="PaxDb" id="224308-BSU10520"/>
<dbReference type="EnsemblBacteria" id="CAB12892">
    <property type="protein sequence ID" value="CAB12892"/>
    <property type="gene ID" value="BSU_10520"/>
</dbReference>
<dbReference type="GeneID" id="936346"/>
<dbReference type="KEGG" id="bsu:BSU10520"/>
<dbReference type="PATRIC" id="fig|224308.179.peg.1131"/>
<dbReference type="eggNOG" id="COG0738">
    <property type="taxonomic scope" value="Bacteria"/>
</dbReference>
<dbReference type="InParanoid" id="O07563"/>
<dbReference type="OrthoDB" id="1674541at2"/>
<dbReference type="PhylomeDB" id="O07563"/>
<dbReference type="BioCyc" id="BSUB:BSU10520-MONOMER"/>
<dbReference type="Proteomes" id="UP000001570">
    <property type="component" value="Chromosome"/>
</dbReference>
<dbReference type="GO" id="GO:0016020">
    <property type="term" value="C:membrane"/>
    <property type="evidence" value="ECO:0000318"/>
    <property type="project" value="GO_Central"/>
</dbReference>
<dbReference type="GO" id="GO:0005886">
    <property type="term" value="C:plasma membrane"/>
    <property type="evidence" value="ECO:0007669"/>
    <property type="project" value="UniProtKB-SubCell"/>
</dbReference>
<dbReference type="GO" id="GO:0022857">
    <property type="term" value="F:transmembrane transporter activity"/>
    <property type="evidence" value="ECO:0007669"/>
    <property type="project" value="InterPro"/>
</dbReference>
<dbReference type="CDD" id="cd17333">
    <property type="entry name" value="MFS_FucP_MFSD4_like"/>
    <property type="match status" value="1"/>
</dbReference>
<dbReference type="Gene3D" id="1.20.1250.20">
    <property type="entry name" value="MFS general substrate transporter like domains"/>
    <property type="match status" value="2"/>
</dbReference>
<dbReference type="InterPro" id="IPR011701">
    <property type="entry name" value="MFS"/>
</dbReference>
<dbReference type="InterPro" id="IPR020846">
    <property type="entry name" value="MFS_dom"/>
</dbReference>
<dbReference type="InterPro" id="IPR036259">
    <property type="entry name" value="MFS_trans_sf"/>
</dbReference>
<dbReference type="InterPro" id="IPR051788">
    <property type="entry name" value="MFS_Transporter"/>
</dbReference>
<dbReference type="PANTHER" id="PTHR23514">
    <property type="entry name" value="BYPASS OF STOP CODON PROTEIN 6"/>
    <property type="match status" value="1"/>
</dbReference>
<dbReference type="PANTHER" id="PTHR23514:SF3">
    <property type="entry name" value="BYPASS OF STOP CODON PROTEIN 6"/>
    <property type="match status" value="1"/>
</dbReference>
<dbReference type="Pfam" id="PF07690">
    <property type="entry name" value="MFS_1"/>
    <property type="match status" value="1"/>
</dbReference>
<dbReference type="SUPFAM" id="SSF103473">
    <property type="entry name" value="MFS general substrate transporter"/>
    <property type="match status" value="1"/>
</dbReference>
<dbReference type="PROSITE" id="PS50850">
    <property type="entry name" value="MFS"/>
    <property type="match status" value="1"/>
</dbReference>
<organism>
    <name type="scientific">Bacillus subtilis (strain 168)</name>
    <dbReference type="NCBI Taxonomy" id="224308"/>
    <lineage>
        <taxon>Bacteria</taxon>
        <taxon>Bacillati</taxon>
        <taxon>Bacillota</taxon>
        <taxon>Bacilli</taxon>
        <taxon>Bacillales</taxon>
        <taxon>Bacillaceae</taxon>
        <taxon>Bacillus</taxon>
    </lineage>
</organism>
<reference key="1">
    <citation type="journal article" date="1998" name="J. Bacteriol.">
        <title>Characterization of glucose-specific catabolite repression-resistant mutants of Bacillus subtilis: identification of a novel hexose:H+ symporter.</title>
        <authorList>
            <person name="Paulsen I.T."/>
            <person name="Chauvaux S."/>
            <person name="Choi P."/>
            <person name="Saier M.H. Jr."/>
        </authorList>
    </citation>
    <scope>NUCLEOTIDE SEQUENCE [GENOMIC DNA]</scope>
    <scope>FUNCTION AS A SYMPORTER</scope>
    <scope>INDUCTION</scope>
    <source>
        <strain>168 / GM273</strain>
    </source>
</reference>
<reference key="2">
    <citation type="submission" date="1997-06" db="EMBL/GenBank/DDBJ databases">
        <authorList>
            <person name="Noback M.A."/>
            <person name="Terpstra P."/>
            <person name="Holsappel S."/>
            <person name="Venema G."/>
            <person name="Bron S."/>
        </authorList>
    </citation>
    <scope>NUCLEOTIDE SEQUENCE [GENOMIC DNA]</scope>
    <source>
        <strain>168</strain>
    </source>
</reference>
<reference key="3">
    <citation type="journal article" date="1997" name="Nature">
        <title>The complete genome sequence of the Gram-positive bacterium Bacillus subtilis.</title>
        <authorList>
            <person name="Kunst F."/>
            <person name="Ogasawara N."/>
            <person name="Moszer I."/>
            <person name="Albertini A.M."/>
            <person name="Alloni G."/>
            <person name="Azevedo V."/>
            <person name="Bertero M.G."/>
            <person name="Bessieres P."/>
            <person name="Bolotin A."/>
            <person name="Borchert S."/>
            <person name="Borriss R."/>
            <person name="Boursier L."/>
            <person name="Brans A."/>
            <person name="Braun M."/>
            <person name="Brignell S.C."/>
            <person name="Bron S."/>
            <person name="Brouillet S."/>
            <person name="Bruschi C.V."/>
            <person name="Caldwell B."/>
            <person name="Capuano V."/>
            <person name="Carter N.M."/>
            <person name="Choi S.-K."/>
            <person name="Codani J.-J."/>
            <person name="Connerton I.F."/>
            <person name="Cummings N.J."/>
            <person name="Daniel R.A."/>
            <person name="Denizot F."/>
            <person name="Devine K.M."/>
            <person name="Duesterhoeft A."/>
            <person name="Ehrlich S.D."/>
            <person name="Emmerson P.T."/>
            <person name="Entian K.-D."/>
            <person name="Errington J."/>
            <person name="Fabret C."/>
            <person name="Ferrari E."/>
            <person name="Foulger D."/>
            <person name="Fritz C."/>
            <person name="Fujita M."/>
            <person name="Fujita Y."/>
            <person name="Fuma S."/>
            <person name="Galizzi A."/>
            <person name="Galleron N."/>
            <person name="Ghim S.-Y."/>
            <person name="Glaser P."/>
            <person name="Goffeau A."/>
            <person name="Golightly E.J."/>
            <person name="Grandi G."/>
            <person name="Guiseppi G."/>
            <person name="Guy B.J."/>
            <person name="Haga K."/>
            <person name="Haiech J."/>
            <person name="Harwood C.R."/>
            <person name="Henaut A."/>
            <person name="Hilbert H."/>
            <person name="Holsappel S."/>
            <person name="Hosono S."/>
            <person name="Hullo M.-F."/>
            <person name="Itaya M."/>
            <person name="Jones L.-M."/>
            <person name="Joris B."/>
            <person name="Karamata D."/>
            <person name="Kasahara Y."/>
            <person name="Klaerr-Blanchard M."/>
            <person name="Klein C."/>
            <person name="Kobayashi Y."/>
            <person name="Koetter P."/>
            <person name="Koningstein G."/>
            <person name="Krogh S."/>
            <person name="Kumano M."/>
            <person name="Kurita K."/>
            <person name="Lapidus A."/>
            <person name="Lardinois S."/>
            <person name="Lauber J."/>
            <person name="Lazarevic V."/>
            <person name="Lee S.-M."/>
            <person name="Levine A."/>
            <person name="Liu H."/>
            <person name="Masuda S."/>
            <person name="Mauel C."/>
            <person name="Medigue C."/>
            <person name="Medina N."/>
            <person name="Mellado R.P."/>
            <person name="Mizuno M."/>
            <person name="Moestl D."/>
            <person name="Nakai S."/>
            <person name="Noback M."/>
            <person name="Noone D."/>
            <person name="O'Reilly M."/>
            <person name="Ogawa K."/>
            <person name="Ogiwara A."/>
            <person name="Oudega B."/>
            <person name="Park S.-H."/>
            <person name="Parro V."/>
            <person name="Pohl T.M."/>
            <person name="Portetelle D."/>
            <person name="Porwollik S."/>
            <person name="Prescott A.M."/>
            <person name="Presecan E."/>
            <person name="Pujic P."/>
            <person name="Purnelle B."/>
            <person name="Rapoport G."/>
            <person name="Rey M."/>
            <person name="Reynolds S."/>
            <person name="Rieger M."/>
            <person name="Rivolta C."/>
            <person name="Rocha E."/>
            <person name="Roche B."/>
            <person name="Rose M."/>
            <person name="Sadaie Y."/>
            <person name="Sato T."/>
            <person name="Scanlan E."/>
            <person name="Schleich S."/>
            <person name="Schroeter R."/>
            <person name="Scoffone F."/>
            <person name="Sekiguchi J."/>
            <person name="Sekowska A."/>
            <person name="Seror S.J."/>
            <person name="Serror P."/>
            <person name="Shin B.-S."/>
            <person name="Soldo B."/>
            <person name="Sorokin A."/>
            <person name="Tacconi E."/>
            <person name="Takagi T."/>
            <person name="Takahashi H."/>
            <person name="Takemaru K."/>
            <person name="Takeuchi M."/>
            <person name="Tamakoshi A."/>
            <person name="Tanaka T."/>
            <person name="Terpstra P."/>
            <person name="Tognoni A."/>
            <person name="Tosato V."/>
            <person name="Uchiyama S."/>
            <person name="Vandenbol M."/>
            <person name="Vannier F."/>
            <person name="Vassarotti A."/>
            <person name="Viari A."/>
            <person name="Wambutt R."/>
            <person name="Wedler E."/>
            <person name="Wedler H."/>
            <person name="Weitzenegger T."/>
            <person name="Winters P."/>
            <person name="Wipat A."/>
            <person name="Yamamoto H."/>
            <person name="Yamane K."/>
            <person name="Yasumoto K."/>
            <person name="Yata K."/>
            <person name="Yoshida K."/>
            <person name="Yoshikawa H.-F."/>
            <person name="Zumstein E."/>
            <person name="Yoshikawa H."/>
            <person name="Danchin A."/>
        </authorList>
    </citation>
    <scope>NUCLEOTIDE SEQUENCE [LARGE SCALE GENOMIC DNA]</scope>
    <source>
        <strain>168</strain>
    </source>
</reference>
<reference key="4">
    <citation type="journal article" date="2007" name="J. Bacteriol.">
        <title>Glucose uptake pathway-specific regulation of synthesis of neotrehalosadiamine, a novel autoinducer produced in Bacillus subtilis.</title>
        <authorList>
            <person name="Inaoka T."/>
            <person name="Ochi K."/>
        </authorList>
    </citation>
    <scope>FUNCTION</scope>
</reference>
<keyword id="KW-1003">Cell membrane</keyword>
<keyword id="KW-0472">Membrane</keyword>
<keyword id="KW-1185">Reference proteome</keyword>
<keyword id="KW-0762">Sugar transport</keyword>
<keyword id="KW-0812">Transmembrane</keyword>
<keyword id="KW-1133">Transmembrane helix</keyword>
<keyword id="KW-0813">Transport</keyword>
<feature type="chain" id="PRO_0000375919" description="Glucose/mannose transporter GlcP">
    <location>
        <begin position="1"/>
        <end position="401"/>
    </location>
</feature>
<feature type="transmembrane region" description="Helical" evidence="1">
    <location>
        <begin position="11"/>
        <end position="31"/>
    </location>
</feature>
<feature type="transmembrane region" description="Helical" evidence="1">
    <location>
        <begin position="43"/>
        <end position="63"/>
    </location>
</feature>
<feature type="transmembrane region" description="Helical" evidence="1">
    <location>
        <begin position="78"/>
        <end position="98"/>
    </location>
</feature>
<feature type="transmembrane region" description="Helical" evidence="1">
    <location>
        <begin position="99"/>
        <end position="119"/>
    </location>
</feature>
<feature type="transmembrane region" description="Helical" evidence="1">
    <location>
        <begin position="132"/>
        <end position="152"/>
    </location>
</feature>
<feature type="transmembrane region" description="Helical" evidence="1">
    <location>
        <begin position="156"/>
        <end position="176"/>
    </location>
</feature>
<feature type="transmembrane region" description="Helical" evidence="1">
    <location>
        <begin position="212"/>
        <end position="232"/>
    </location>
</feature>
<feature type="transmembrane region" description="Helical" evidence="1">
    <location>
        <begin position="247"/>
        <end position="267"/>
    </location>
</feature>
<feature type="transmembrane region" description="Helical" evidence="1">
    <location>
        <begin position="278"/>
        <end position="298"/>
    </location>
</feature>
<feature type="transmembrane region" description="Helical" evidence="1">
    <location>
        <begin position="306"/>
        <end position="326"/>
    </location>
</feature>
<feature type="transmembrane region" description="Helical" evidence="1">
    <location>
        <begin position="336"/>
        <end position="356"/>
    </location>
</feature>
<feature type="transmembrane region" description="Helical" evidence="1">
    <location>
        <begin position="360"/>
        <end position="380"/>
    </location>
</feature>
<evidence type="ECO:0000255" key="1"/>
<evidence type="ECO:0000269" key="2">
    <source>
    </source>
</evidence>
<evidence type="ECO:0000269" key="3">
    <source>
    </source>
</evidence>
<evidence type="ECO:0000305" key="4"/>
<sequence length="401" mass="44910">MLRGTYLFGYAFFFTVGIIHISTGSLTPFLLEAFNKTTDDISVIIFFQFTGFLSGVLIAPLMIKKYSHFRTLTLALTIMLVALSIFFLTKDWYYIIVMAFLLGYGAGTLETTVGSFVIANFESNAEKMSKLEVLFGLGALSFPLLINSFIDINNWFLPYYCIFTFLFVLFVGWLIFLSKNREYAKNANQQVTFPDGGAFQYFIGDRKKSKQLGFFVFFAFLYAGIETNFANFLPSIMINQDNEQISLISVSFFWVGIIIGRILIGFVSRRLDFSKYLLFSCSCLIVLLIAFSYISNPILQLSGTFLIGLSIAGIFPIALTLASIIIQKYVDEVTSLFIASASFGGAIISFLIGWSLNQDTILLTMGIFTTMAVILVGISVKIRRTKTEDPISLENKASKTQ</sequence>
<comment type="function">
    <text evidence="2 3">Can transport glucose, mannose, 2-deoxyglucose and methyl alpha-glucoside, but not galactose.</text>
</comment>
<comment type="subcellular location">
    <subcellularLocation>
        <location evidence="4">Cell membrane</location>
        <topology evidence="4">Multi-pass membrane protein</topology>
    </subcellularLocation>
</comment>
<comment type="induction">
    <text evidence="3">Induced by glucose. Induction depends upon the integrity of the glucose-specific PTS system.</text>
</comment>
<comment type="similarity">
    <text evidence="4">Belongs to the major facilitator superfamily.</text>
</comment>
<name>GLCP_BACSU</name>
<accession>O07563</accession>
<accession>Q796S3</accession>
<gene>
    <name type="primary">glcP</name>
    <name type="synonym">glcT1</name>
    <name type="synonym">yhjI</name>
    <name type="ordered locus">BSU10520</name>
</gene>
<protein>
    <recommendedName>
        <fullName>Glucose/mannose transporter GlcP</fullName>
    </recommendedName>
    <alternativeName>
        <fullName>Glucose/mannose:H(+) symporter</fullName>
    </alternativeName>
</protein>